<dbReference type="EC" id="7.1.1.-" evidence="1"/>
<dbReference type="EMBL" id="AP008981">
    <property type="protein sequence ID" value="BAG41049.1"/>
    <property type="molecule type" value="Genomic_DNA"/>
</dbReference>
<dbReference type="SMR" id="B3CUK2"/>
<dbReference type="KEGG" id="ott:OTT_1591"/>
<dbReference type="HOGENOM" id="CLU_015134_0_1_5"/>
<dbReference type="OrthoDB" id="9803734at2"/>
<dbReference type="Proteomes" id="UP000001033">
    <property type="component" value="Chromosome"/>
</dbReference>
<dbReference type="GO" id="GO:0005886">
    <property type="term" value="C:plasma membrane"/>
    <property type="evidence" value="ECO:0007669"/>
    <property type="project" value="UniProtKB-SubCell"/>
</dbReference>
<dbReference type="GO" id="GO:0003954">
    <property type="term" value="F:NADH dehydrogenase activity"/>
    <property type="evidence" value="ECO:0007669"/>
    <property type="project" value="TreeGrafter"/>
</dbReference>
<dbReference type="GO" id="GO:0016655">
    <property type="term" value="F:oxidoreductase activity, acting on NAD(P)H, quinone or similar compound as acceptor"/>
    <property type="evidence" value="ECO:0007669"/>
    <property type="project" value="UniProtKB-UniRule"/>
</dbReference>
<dbReference type="GO" id="GO:0048038">
    <property type="term" value="F:quinone binding"/>
    <property type="evidence" value="ECO:0007669"/>
    <property type="project" value="UniProtKB-KW"/>
</dbReference>
<dbReference type="GO" id="GO:0009060">
    <property type="term" value="P:aerobic respiration"/>
    <property type="evidence" value="ECO:0007669"/>
    <property type="project" value="TreeGrafter"/>
</dbReference>
<dbReference type="HAMAP" id="MF_01350">
    <property type="entry name" value="NDH1_NuoH"/>
    <property type="match status" value="1"/>
</dbReference>
<dbReference type="InterPro" id="IPR001694">
    <property type="entry name" value="NADH_UbQ_OxRdtase_su1/FPO"/>
</dbReference>
<dbReference type="InterPro" id="IPR018086">
    <property type="entry name" value="NADH_UbQ_OxRdtase_su1_CS"/>
</dbReference>
<dbReference type="NCBIfam" id="NF004741">
    <property type="entry name" value="PRK06076.1-2"/>
    <property type="match status" value="1"/>
</dbReference>
<dbReference type="NCBIfam" id="NF004745">
    <property type="entry name" value="PRK06076.1-6"/>
    <property type="match status" value="1"/>
</dbReference>
<dbReference type="PANTHER" id="PTHR11432">
    <property type="entry name" value="NADH DEHYDROGENASE SUBUNIT 1"/>
    <property type="match status" value="1"/>
</dbReference>
<dbReference type="PANTHER" id="PTHR11432:SF3">
    <property type="entry name" value="NADH-UBIQUINONE OXIDOREDUCTASE CHAIN 1"/>
    <property type="match status" value="1"/>
</dbReference>
<dbReference type="Pfam" id="PF00146">
    <property type="entry name" value="NADHdh"/>
    <property type="match status" value="1"/>
</dbReference>
<dbReference type="PROSITE" id="PS00667">
    <property type="entry name" value="COMPLEX1_ND1_1"/>
    <property type="match status" value="1"/>
</dbReference>
<dbReference type="PROSITE" id="PS00668">
    <property type="entry name" value="COMPLEX1_ND1_2"/>
    <property type="match status" value="1"/>
</dbReference>
<keyword id="KW-0997">Cell inner membrane</keyword>
<keyword id="KW-1003">Cell membrane</keyword>
<keyword id="KW-0472">Membrane</keyword>
<keyword id="KW-0520">NAD</keyword>
<keyword id="KW-0874">Quinone</keyword>
<keyword id="KW-1278">Translocase</keyword>
<keyword id="KW-0812">Transmembrane</keyword>
<keyword id="KW-1133">Transmembrane helix</keyword>
<keyword id="KW-0830">Ubiquinone</keyword>
<reference key="1">
    <citation type="journal article" date="2008" name="DNA Res.">
        <title>The whole-genome sequencing of the obligate intracellular bacterium Orientia tsutsugamushi revealed massive gene amplification during reductive genome evolution.</title>
        <authorList>
            <person name="Nakayama K."/>
            <person name="Yamashita A."/>
            <person name="Kurokawa K."/>
            <person name="Morimoto T."/>
            <person name="Ogawa M."/>
            <person name="Fukuhara M."/>
            <person name="Urakami H."/>
            <person name="Ohnishi M."/>
            <person name="Uchiyama I."/>
            <person name="Ogura Y."/>
            <person name="Ooka T."/>
            <person name="Oshima K."/>
            <person name="Tamura A."/>
            <person name="Hattori M."/>
            <person name="Hayashi T."/>
        </authorList>
    </citation>
    <scope>NUCLEOTIDE SEQUENCE [LARGE SCALE GENOMIC DNA]</scope>
    <source>
        <strain>Ikeda</strain>
    </source>
</reference>
<proteinExistence type="inferred from homology"/>
<sequence length="347" mass="38513">MTICTDIIANGYDLKTLIYNSGVVSIKVIALIICLLLATAYLTFAERKVIAYMQLRVGPSLAGPFGLLQPIADAVKLVFKEPIIPAKADRKLFIIAPIITFVLSLLGWSVIPIDHDIVLSRIHIGGILFILAVTSLGVYGIIIAGWASNSKYAFLGAVRSAAQMISYELAMALSIVAVLIVTGEMDLIQIVEAQKTRPIWLTIMMLPLAVIYFISILAKTNRLPFDLPEAESELVAGYNVEYSSMAFAMFFLGEYANMILGSSLMTIMFLGGYLPPFNLEILTFIPGYIWFILKVSMVLFCFLWIRATLPRYRYDQLMYLGLKVFLPIVLAWIIVVSAILVYSNNLP</sequence>
<organism>
    <name type="scientific">Orientia tsutsugamushi (strain Ikeda)</name>
    <name type="common">Rickettsia tsutsugamushi</name>
    <dbReference type="NCBI Taxonomy" id="334380"/>
    <lineage>
        <taxon>Bacteria</taxon>
        <taxon>Pseudomonadati</taxon>
        <taxon>Pseudomonadota</taxon>
        <taxon>Alphaproteobacteria</taxon>
        <taxon>Rickettsiales</taxon>
        <taxon>Rickettsiaceae</taxon>
        <taxon>Rickettsieae</taxon>
        <taxon>Orientia</taxon>
    </lineage>
</organism>
<name>NUOH_ORITI</name>
<protein>
    <recommendedName>
        <fullName evidence="1">NADH-quinone oxidoreductase subunit H</fullName>
        <ecNumber evidence="1">7.1.1.-</ecNumber>
    </recommendedName>
    <alternativeName>
        <fullName evidence="1">NADH dehydrogenase I subunit H</fullName>
    </alternativeName>
    <alternativeName>
        <fullName evidence="1">NDH-1 subunit H</fullName>
    </alternativeName>
</protein>
<gene>
    <name evidence="1" type="primary">nuoH</name>
    <name type="ordered locus">OTT_1591</name>
</gene>
<comment type="function">
    <text evidence="1">NDH-1 shuttles electrons from NADH, via FMN and iron-sulfur (Fe-S) centers, to quinones in the respiratory chain. The immediate electron acceptor for the enzyme in this species is believed to be ubiquinone. Couples the redox reaction to proton translocation (for every two electrons transferred, four hydrogen ions are translocated across the cytoplasmic membrane), and thus conserves the redox energy in a proton gradient. This subunit may bind ubiquinone.</text>
</comment>
<comment type="catalytic activity">
    <reaction evidence="1">
        <text>a quinone + NADH + 5 H(+)(in) = a quinol + NAD(+) + 4 H(+)(out)</text>
        <dbReference type="Rhea" id="RHEA:57888"/>
        <dbReference type="ChEBI" id="CHEBI:15378"/>
        <dbReference type="ChEBI" id="CHEBI:24646"/>
        <dbReference type="ChEBI" id="CHEBI:57540"/>
        <dbReference type="ChEBI" id="CHEBI:57945"/>
        <dbReference type="ChEBI" id="CHEBI:132124"/>
    </reaction>
</comment>
<comment type="subunit">
    <text evidence="1">NDH-1 is composed of 14 different subunits. Subunits NuoA, H, J, K, L, M, N constitute the membrane sector of the complex.</text>
</comment>
<comment type="subcellular location">
    <subcellularLocation>
        <location evidence="1">Cell inner membrane</location>
        <topology evidence="1">Multi-pass membrane protein</topology>
    </subcellularLocation>
</comment>
<comment type="similarity">
    <text evidence="1">Belongs to the complex I subunit 1 family.</text>
</comment>
<accession>B3CUK2</accession>
<evidence type="ECO:0000255" key="1">
    <source>
        <dbReference type="HAMAP-Rule" id="MF_01350"/>
    </source>
</evidence>
<feature type="chain" id="PRO_1000143609" description="NADH-quinone oxidoreductase subunit H">
    <location>
        <begin position="1"/>
        <end position="347"/>
    </location>
</feature>
<feature type="transmembrane region" description="Helical" evidence="1">
    <location>
        <begin position="22"/>
        <end position="42"/>
    </location>
</feature>
<feature type="transmembrane region" description="Helical" evidence="1">
    <location>
        <begin position="59"/>
        <end position="79"/>
    </location>
</feature>
<feature type="transmembrane region" description="Helical" evidence="1">
    <location>
        <begin position="93"/>
        <end position="113"/>
    </location>
</feature>
<feature type="transmembrane region" description="Helical" evidence="1">
    <location>
        <begin position="124"/>
        <end position="144"/>
    </location>
</feature>
<feature type="transmembrane region" description="Helical" evidence="1">
    <location>
        <begin position="171"/>
        <end position="191"/>
    </location>
</feature>
<feature type="transmembrane region" description="Helical" evidence="1">
    <location>
        <begin position="198"/>
        <end position="218"/>
    </location>
</feature>
<feature type="transmembrane region" description="Helical" evidence="1">
    <location>
        <begin position="240"/>
        <end position="260"/>
    </location>
</feature>
<feature type="transmembrane region" description="Helical" evidence="1">
    <location>
        <begin position="285"/>
        <end position="305"/>
    </location>
</feature>
<feature type="transmembrane region" description="Helical" evidence="1">
    <location>
        <begin position="321"/>
        <end position="341"/>
    </location>
</feature>